<keyword id="KW-0002">3D-structure</keyword>
<keyword id="KW-0007">Acetylation</keyword>
<keyword id="KW-0025">Alternative splicing</keyword>
<keyword id="KW-0067">ATP-binding</keyword>
<keyword id="KW-0106">Calcium</keyword>
<keyword id="KW-0109">Calcium transport</keyword>
<keyword id="KW-0112">Calmodulin-binding</keyword>
<keyword id="KW-1003">Cell membrane</keyword>
<keyword id="KW-0966">Cell projection</keyword>
<keyword id="KW-0968">Cytoplasmic vesicle</keyword>
<keyword id="KW-0225">Disease variant</keyword>
<keyword id="KW-0991">Intellectual disability</keyword>
<keyword id="KW-0406">Ion transport</keyword>
<keyword id="KW-0460">Magnesium</keyword>
<keyword id="KW-0472">Membrane</keyword>
<keyword id="KW-0479">Metal-binding</keyword>
<keyword id="KW-0547">Nucleotide-binding</keyword>
<keyword id="KW-0597">Phosphoprotein</keyword>
<keyword id="KW-1267">Proteomics identification</keyword>
<keyword id="KW-1185">Reference proteome</keyword>
<keyword id="KW-0770">Synapse</keyword>
<keyword id="KW-1278">Translocase</keyword>
<keyword id="KW-0812">Transmembrane</keyword>
<keyword id="KW-1133">Transmembrane helix</keyword>
<keyword id="KW-0813">Transport</keyword>
<feature type="initiator methionine" description="Removed" evidence="25">
    <location>
        <position position="1"/>
    </location>
</feature>
<feature type="chain" id="PRO_0000046209" description="Plasma membrane calcium-transporting ATPase 1">
    <location>
        <begin position="2"/>
        <end position="1220"/>
    </location>
</feature>
<feature type="topological domain" description="Cytoplasmic" evidence="18">
    <location>
        <begin position="2"/>
        <end position="105"/>
    </location>
</feature>
<feature type="transmembrane region" description="Helical" evidence="13">
    <location>
        <begin position="106"/>
        <end position="126"/>
    </location>
</feature>
<feature type="topological domain" description="Extracellular" evidence="18">
    <location>
        <begin position="127"/>
        <end position="154"/>
    </location>
</feature>
<feature type="transmembrane region" description="Helical" evidence="13">
    <location>
        <begin position="155"/>
        <end position="175"/>
    </location>
</feature>
<feature type="topological domain" description="Cytoplasmic" evidence="18">
    <location>
        <begin position="176"/>
        <end position="366"/>
    </location>
</feature>
<feature type="transmembrane region" description="Helical" evidence="13">
    <location>
        <begin position="367"/>
        <end position="386"/>
    </location>
</feature>
<feature type="topological domain" description="Extracellular" evidence="18">
    <location>
        <begin position="387"/>
        <end position="418"/>
    </location>
</feature>
<feature type="transmembrane region" description="Helical" evidence="4">
    <location>
        <begin position="419"/>
        <end position="439"/>
    </location>
</feature>
<feature type="topological domain" description="Cytoplasmic" evidence="18">
    <location>
        <begin position="440"/>
        <end position="855"/>
    </location>
</feature>
<feature type="transmembrane region" description="Helical" evidence="4">
    <location>
        <begin position="856"/>
        <end position="876"/>
    </location>
</feature>
<feature type="topological domain" description="Extracellular" evidence="18">
    <location>
        <begin position="877"/>
        <end position="882"/>
    </location>
</feature>
<feature type="transmembrane region" description="Helical" evidence="4">
    <location>
        <begin position="883"/>
        <end position="903"/>
    </location>
</feature>
<feature type="topological domain" description="Cytoplasmic" evidence="18">
    <location>
        <begin position="904"/>
        <end position="927"/>
    </location>
</feature>
<feature type="transmembrane region" description="Helical" evidence="13">
    <location>
        <begin position="928"/>
        <end position="948"/>
    </location>
</feature>
<feature type="topological domain" description="Extracellular" evidence="18">
    <location>
        <begin position="949"/>
        <end position="971"/>
    </location>
</feature>
<feature type="transmembrane region" description="Helical" evidence="13">
    <location>
        <begin position="972"/>
        <end position="991"/>
    </location>
</feature>
<feature type="topological domain" description="Cytoplasmic" evidence="18">
    <location>
        <begin position="992"/>
        <end position="1005"/>
    </location>
</feature>
<feature type="transmembrane region" description="Helical" evidence="13">
    <location>
        <begin position="1006"/>
        <end position="1027"/>
    </location>
</feature>
<feature type="topological domain" description="Extracellular" evidence="18">
    <location>
        <begin position="1028"/>
        <end position="1039"/>
    </location>
</feature>
<feature type="transmembrane region" description="Helical" evidence="13">
    <location>
        <begin position="1040"/>
        <end position="1060"/>
    </location>
</feature>
<feature type="topological domain" description="Cytoplasmic" evidence="18">
    <location>
        <begin position="1061"/>
        <end position="1220"/>
    </location>
</feature>
<feature type="region of interest" description="Disordered" evidence="5">
    <location>
        <begin position="297"/>
        <end position="356"/>
    </location>
</feature>
<feature type="region of interest" description="Calmodulin-binding subdomain A" evidence="19">
    <location>
        <begin position="1100"/>
        <end position="1117"/>
    </location>
</feature>
<feature type="region of interest" description="Required for basolateral membrane targeting" evidence="2">
    <location>
        <begin position="1118"/>
        <end position="1220"/>
    </location>
</feature>
<feature type="region of interest" description="Disordered" evidence="5">
    <location>
        <begin position="1160"/>
        <end position="1220"/>
    </location>
</feature>
<feature type="compositionally biased region" description="Basic and acidic residues" evidence="5">
    <location>
        <begin position="312"/>
        <end position="325"/>
    </location>
</feature>
<feature type="compositionally biased region" description="Basic and acidic residues" evidence="5">
    <location>
        <begin position="337"/>
        <end position="356"/>
    </location>
</feature>
<feature type="compositionally biased region" description="Polar residues" evidence="5">
    <location>
        <begin position="1200"/>
        <end position="1220"/>
    </location>
</feature>
<feature type="active site" description="4-aspartylphosphate intermediate" evidence="3">
    <location>
        <position position="475"/>
    </location>
</feature>
<feature type="binding site" evidence="3">
    <location>
        <position position="475"/>
    </location>
    <ligand>
        <name>Mg(2+)</name>
        <dbReference type="ChEBI" id="CHEBI:18420"/>
    </ligand>
</feature>
<feature type="binding site" evidence="3">
    <location>
        <position position="477"/>
    </location>
    <ligand>
        <name>Mg(2+)</name>
        <dbReference type="ChEBI" id="CHEBI:18420"/>
    </ligand>
</feature>
<feature type="binding site" evidence="3">
    <location>
        <position position="797"/>
    </location>
    <ligand>
        <name>Mg(2+)</name>
        <dbReference type="ChEBI" id="CHEBI:18420"/>
    </ligand>
</feature>
<feature type="modified residue" description="N-acetylglycine" evidence="25">
    <location>
        <position position="2"/>
    </location>
</feature>
<feature type="modified residue" description="Phosphoserine" evidence="27">
    <location>
        <position position="8"/>
    </location>
</feature>
<feature type="modified residue" description="Phosphoserine" evidence="24 27">
    <location>
        <position position="17"/>
    </location>
</feature>
<feature type="modified residue" description="Phosphoserine" evidence="1">
    <location>
        <position position="338"/>
    </location>
</feature>
<feature type="modified residue" description="Phosphothreonine; by PKC" evidence="9">
    <location>
        <position position="1116"/>
    </location>
</feature>
<feature type="modified residue" description="Phosphoserine" evidence="2">
    <location>
        <position position="1140"/>
    </location>
</feature>
<feature type="modified residue" description="Phosphoserine" evidence="23 24 25 26 27 28">
    <location>
        <position position="1155"/>
    </location>
</feature>
<feature type="modified residue" description="Phosphothreonine" evidence="24 25 27">
    <location>
        <position position="1165"/>
    </location>
</feature>
<feature type="modified residue" description="Phosphoserine; by PKA" evidence="24 26">
    <location>
        <position position="1178"/>
    </location>
</feature>
<feature type="modified residue" description="Phosphoserine" evidence="23 24 26">
    <location>
        <position position="1182"/>
    </location>
</feature>
<feature type="splice variant" id="VSP_059771" description="In isoform K.">
    <location>
        <begin position="1021"/>
        <end position="1056"/>
    </location>
</feature>
<feature type="splice variant" id="VSP_059772" description="In isoform C.">
    <original>Q</original>
    <variation>QMDVVNAFQSGSSIQGALRRQPSIASQHHD</variation>
    <location>
        <position position="1117"/>
    </location>
</feature>
<feature type="splice variant" id="VSP_059773" description="In isoform D.">
    <original>Q</original>
    <variation>QMDVVNAFQSGSSIQGALRRQPSIASQHHDVTNISTPTH</variation>
    <location>
        <position position="1117"/>
    </location>
</feature>
<feature type="splice variant" id="VSP_059774" description="In isoform A and isoform E.">
    <original>IR</original>
    <variation>MD</variation>
    <location>
        <begin position="1118"/>
        <end position="1119"/>
    </location>
</feature>
<feature type="splice variant" id="VSP_059775" description="In isoform A.">
    <original>RSSLYEGLEKPESRSSIHNFMTHPEFRIEDSEPHIPLIDDTDAEDDAPTKRNSSPPPSPNKNNNAVDSGIHLTIEMNKSATSSSPGSPLHSLETSL</original>
    <variation>QSGSSIQGALRRQPSIASQHHDVTNISTPTHVVFSSSTASTTVGYSSGECIS</variation>
    <location>
        <begin position="1125"/>
        <end position="1220"/>
    </location>
</feature>
<feature type="splice variant" id="VSP_059776" description="In isoform E.">
    <original>RSSLYEGLEKPESRSSIHNFMTHPEFRIEDSEPHIPLIDDTDAEDDAPTKRNSSPPPSPNKNNNAVDSGIHLTIEMNKSATSSSPGSPLHSLETSL</original>
    <variation>QSGSSIQGALRRQPSIASQHHDVTNISTPTHVVFSSSTASTTVGFEW</variation>
    <location>
        <begin position="1125"/>
        <end position="1220"/>
    </location>
</feature>
<feature type="sequence variant" id="VAR_087432" description="In MRD66." evidence="14">
    <location>
        <begin position="153"/>
        <end position="1220"/>
    </location>
</feature>
<feature type="sequence variant" id="VAR_087433" description="In MRD66; decreased calcium ion export across plasma membrane; decreased localization to plasma membrane; dbSNP:rs2136192267." evidence="14">
    <original>D</original>
    <variation>G</variation>
    <location>
        <position position="239"/>
    </location>
</feature>
<feature type="sequence variant" id="VAR_087434" description="In MRD66; decreased calcium ion export across plasma membrane; decreased localization to plasma membrane; dbSNP:rs2136158725." evidence="14">
    <original>T</original>
    <variation>I</variation>
    <location>
        <position position="264"/>
    </location>
</feature>
<feature type="sequence variant" id="VAR_000698" evidence="15">
    <original>M</original>
    <variation>R</variation>
    <location>
        <position position="267"/>
    </location>
</feature>
<feature type="sequence variant" id="VAR_087435" description="In MRD66; decreased calcium ion export across plasma membrane; dbSNP:rs2136106360." evidence="14">
    <original>T</original>
    <variation>K</variation>
    <location>
        <position position="425"/>
    </location>
</feature>
<feature type="sequence variant" id="VAR_087436" description="In MRD66; decreased calcium ion export across plasma membrane; dbSNP:rs1879993052." evidence="14">
    <original>H</original>
    <variation>R</variation>
    <location>
        <position position="459"/>
    </location>
</feature>
<feature type="sequence variant" id="VAR_087437" description="In MRD66." evidence="14">
    <location>
        <begin position="597"/>
        <end position="1220"/>
    </location>
</feature>
<feature type="sequence variant" id="VAR_087438" description="Found in a patient with developmental delay; uncertain significance; no effect on calcium ion export across plasma membrane." evidence="14">
    <original>I</original>
    <variation>T</variation>
    <location>
        <position position="598"/>
    </location>
</feature>
<feature type="sequence variant" id="VAR_087439" description="In MRD66; decreased calcium ion export across plasma membrane." evidence="14">
    <original>R</original>
    <variation>P</variation>
    <location>
        <position position="763"/>
    </location>
</feature>
<feature type="sequence variant" id="VAR_087440" description="No effect on calcium ion export across plasma membrane; dbSNP:rs781703158." evidence="14">
    <original>G</original>
    <variation>S</variation>
    <location>
        <position position="779"/>
    </location>
</feature>
<feature type="sequence variant" id="VAR_087441" description="In MRD66; decreased calcium ion export across plasma membrane; dbSNP:rs1161061134." evidence="14">
    <original>R</original>
    <variation>C</variation>
    <location>
        <position position="789"/>
    </location>
</feature>
<feature type="sequence variant" id="VAR_087442" description="In MRD66; decreased calcium ion export across plasma membrane; dbSNP:rs2135949570." evidence="14">
    <original>E</original>
    <variation>K</variation>
    <location>
        <position position="824"/>
    </location>
</feature>
<feature type="sequence variant" id="VAR_087443" description="In MRD66; decreased calcium ion export across plasma membrane." evidence="14">
    <original>Q</original>
    <variation>R</variation>
    <location>
        <position position="857"/>
    </location>
</feature>
<feature type="sequence variant" id="VAR_087444" description="In MRD66." evidence="14">
    <location>
        <begin position="878"/>
        <end position="1220"/>
    </location>
</feature>
<feature type="sequence variant" id="VAR_087445" description="In MRD66; decreased calcium ion export across plasma membrane; decreased localization to plasma membrane; dbSNP:rs1433458409." evidence="14">
    <original>R</original>
    <variation>Q</variation>
    <location>
        <position position="991"/>
    </location>
</feature>
<feature type="sequence conflict" description="In Ref. 2; AAA36000." evidence="18" ref="2">
    <original>LLLS</original>
    <variation>MSAT</variation>
    <location>
        <begin position="259"/>
        <end position="262"/>
    </location>
</feature>
<organism>
    <name type="scientific">Homo sapiens</name>
    <name type="common">Human</name>
    <dbReference type="NCBI Taxonomy" id="9606"/>
    <lineage>
        <taxon>Eukaryota</taxon>
        <taxon>Metazoa</taxon>
        <taxon>Chordata</taxon>
        <taxon>Craniata</taxon>
        <taxon>Vertebrata</taxon>
        <taxon>Euteleostomi</taxon>
        <taxon>Mammalia</taxon>
        <taxon>Eutheria</taxon>
        <taxon>Euarchontoglires</taxon>
        <taxon>Primates</taxon>
        <taxon>Haplorrhini</taxon>
        <taxon>Catarrhini</taxon>
        <taxon>Hominidae</taxon>
        <taxon>Homo</taxon>
    </lineage>
</organism>
<accession>P20020</accession>
<accession>Q12992</accession>
<accession>Q12993</accession>
<accession>Q13819</accession>
<accession>Q13820</accession>
<accession>Q13821</accession>
<accession>Q16504</accession>
<accession>Q93082</accession>
<proteinExistence type="evidence at protein level"/>
<name>AT2B1_HUMAN</name>
<protein>
    <recommendedName>
        <fullName evidence="18">Plasma membrane calcium-transporting ATPase 1</fullName>
        <ecNumber evidence="20">7.2.2.10</ecNumber>
    </recommendedName>
    <alternativeName>
        <fullName evidence="17">Plasma membrane calcium ATPase isoform 1</fullName>
        <shortName evidence="17">PMCA1</shortName>
    </alternativeName>
    <alternativeName>
        <fullName>Plasma membrane calcium pump isoform 1</fullName>
    </alternativeName>
</protein>
<comment type="function">
    <text evidence="1 12 14">Catalyzes the hydrolysis of ATP coupled with the transport of calcium from the cytoplasm to the extracellular space thereby maintaining intracellular calcium homeostasis (PubMed:35358416). Plays a role in blood pressure regulation through regulation of intracellular calcium concentration and nitric oxide production leading to regulation of vascular smooth muscle cells vasoconstriction. Positively regulates bone mineralization through absorption of calcium from the intestine. Plays dual roles in osteoclast differentiation and survival by regulating RANKL-induced calcium oscillations in preosteoclasts and mediating calcium extrusion in mature osteoclasts (By similarity). Regulates insulin sensitivity through calcium/calmodulin signaling pathway by regulating AKT1 activation and NOS3 activation in endothelial cells (PubMed:29104511). May play a role in synaptic transmission by modulating calcium and proton dynamics at the synaptic vesicles.</text>
</comment>
<comment type="catalytic activity">
    <reaction evidence="20">
        <text>Ca(2+)(in) + ATP + H2O = Ca(2+)(out) + ADP + phosphate + H(+)</text>
        <dbReference type="Rhea" id="RHEA:18105"/>
        <dbReference type="ChEBI" id="CHEBI:15377"/>
        <dbReference type="ChEBI" id="CHEBI:15378"/>
        <dbReference type="ChEBI" id="CHEBI:29108"/>
        <dbReference type="ChEBI" id="CHEBI:30616"/>
        <dbReference type="ChEBI" id="CHEBI:43474"/>
        <dbReference type="ChEBI" id="CHEBI:456216"/>
        <dbReference type="EC" id="7.2.2.10"/>
    </reaction>
    <physiologicalReaction direction="left-to-right" evidence="20">
        <dbReference type="Rhea" id="RHEA:18106"/>
    </physiologicalReaction>
</comment>
<comment type="biophysicochemical properties">
    <kinetics>
        <KM evidence="13">519.5 uM for ATP (in complex with NPTN)</KM>
        <Vmax evidence="13">325.5 nmol/min/mg enzyme</Vmax>
    </kinetics>
</comment>
<comment type="subunit">
    <text evidence="1 6 7 8 11 13">Monomer (PubMed:1332771). Dimer (PubMed:1332771). Oligomer (PubMed:1332771). Calmodulin binding (PubMed:1332771). Interacts with PDZD11 (PubMed:12763866). Interacts with SLC35G1 and STIM1; inhibits calcium-transporting ATPase activity after store depletion (PubMed:22084111). Interacts with YWHAE; interacts with the monomeric and dimeric forms of the YWHAE but prefer the monomer form; this interaction inhibits calcium-transporting ATPase activity (PubMed:18029012). Interacts with NPTN; this interaction stabilizes ATP2B1 and increases ATPase activity; this interaction controls T cell calcium homeostasis following T cell activation (PubMed:30190470). Interacts with EPB41; regulates small intestinal calcium absorption through regulation of membrane expression of ATP2B1 (By similarity).</text>
</comment>
<comment type="interaction">
    <interactant intactId="EBI-5279998">
        <id>P20020</id>
    </interactant>
    <interactant intactId="EBI-357345">
        <id>Q14160</id>
        <label>SCRIB</label>
    </interactant>
    <organismsDiffer>false</organismsDiffer>
    <experiments>2</experiments>
</comment>
<comment type="subcellular location">
    <subcellularLocation>
        <location evidence="8 14">Cell membrane</location>
        <topology evidence="4">Multi-pass membrane protein</topology>
    </subcellularLocation>
    <subcellularLocation>
        <location evidence="1">Basolateral cell membrane</location>
    </subcellularLocation>
    <subcellularLocation>
        <location evidence="1">Synapse</location>
    </subcellularLocation>
    <subcellularLocation>
        <location evidence="1">Presynaptic cell membrane</location>
        <topology evidence="4">Multi-pass membrane protein</topology>
    </subcellularLocation>
    <subcellularLocation>
        <location evidence="1">Cytoplasmic vesicle</location>
        <location evidence="1">Secretory vesicle</location>
        <location evidence="1">Synaptic vesicle membrane</location>
        <topology evidence="4">Multi-pass membrane protein</topology>
    </subcellularLocation>
    <text evidence="1">Colocalizes with SV2A in photoreceptor synaptic terminals. Colocalizes with NPTN to the immunological synapse. Colocalizes with EPB41 to the basolateral membrane in enterocyte. Preferentially sorted to recycling synaptic vesicles.</text>
</comment>
<comment type="alternative products">
    <event type="alternative splicing"/>
    <isoform>
        <id>P20020-3</id>
        <name>B</name>
        <name>CI</name>
        <name evidence="16">hPMCA1b</name>
        <sequence type="displayed"/>
    </isoform>
    <isoform>
        <id>P20020-1</id>
        <name>D</name>
        <name>CIV</name>
        <name evidence="16">hPMCA1d</name>
        <sequence type="described" ref="VSP_059773"/>
    </isoform>
    <isoform>
        <id>P20020-2</id>
        <name>A</name>
        <name>CII</name>
        <name evidence="16">hPMCA1a</name>
        <sequence type="described" ref="VSP_059774 VSP_059775"/>
    </isoform>
    <isoform>
        <id>P20020-4</id>
        <name>C</name>
        <name>CIII</name>
        <name evidence="16">hPMCA1c</name>
        <sequence type="described" ref="VSP_059772"/>
    </isoform>
    <isoform>
        <id>P20020-5</id>
        <name>E</name>
        <name>CV</name>
        <sequence type="described" ref="VSP_059774 VSP_059776"/>
    </isoform>
    <isoform>
        <id>P20020-6</id>
        <name>K</name>
        <sequence type="described" ref="VSP_059771"/>
    </isoform>
</comment>
<comment type="tissue specificity">
    <text evidence="10">Isoform B: Ubiquitously expressed. Isoform C: Found in brain cortex, skeletal muscle and heart muscle. Isoform D: Has only been found in fetal skeletal muscle. Isoform K: Found in small intestine and liver. Abundantly expressed in the endometrial epithelial cells and glandular epithelial cells in early-proliferative phase and early-secretory phases (PubMed:21400627).</text>
</comment>
<comment type="induction">
    <text evidence="10">Up-regulated at the proliferative phase of the mentrual cycle. Up-regulated by estrogen.</text>
</comment>
<comment type="domain">
    <text evidence="7">Isoforms A, C, D and E contain an additional calmodulin-binding subdomain B which is different in the different splice variants and shows pH dependent calmodulin binding properties.</text>
</comment>
<comment type="disease" evidence="14">
    <disease id="DI-06443">
        <name>Intellectual developmental disorder, autosomal dominant 66</name>
        <acronym>MRD66</acronym>
        <description>An autosomal dominant disorder characterized by mild to moderate global development delay, impaired intellectual development, and speech delay. Additional common symptoms include autism, seizures, and distal limb abnormalities. Disease severity is highly variable.</description>
        <dbReference type="MIM" id="619910"/>
    </disease>
    <text>The disease is caused by variants affecting the gene represented in this entry.</text>
</comment>
<comment type="similarity">
    <text evidence="18">Belongs to the cation transport ATPase (P-type) (TC 3.A.3) family. Type IIB subfamily.</text>
</comment>
<reference key="1">
    <citation type="journal article" date="1988" name="J. Biol. Chem.">
        <title>Complete primary structure of a human plasma membrane Ca2+ pump.</title>
        <authorList>
            <person name="Verma A.K."/>
            <person name="Filoteo A.G."/>
            <person name="Stanford D.R."/>
            <person name="Wieben E.D."/>
            <person name="Penniston J.T."/>
            <person name="Strehler E.E."/>
            <person name="Fischer R."/>
            <person name="Heim R."/>
            <person name="Vogel G."/>
            <person name="Mathews S."/>
            <person name="Strehler-Page M.-A."/>
            <person name="James P."/>
            <person name="Vorherr T.E."/>
            <person name="Krebs J."/>
            <person name="Carafoli E."/>
        </authorList>
    </citation>
    <scope>NUCLEOTIDE SEQUENCE [MRNA] (ISOFORM B)</scope>
    <source>
        <tissue>Erythrocyte</tissue>
    </source>
</reference>
<reference key="2">
    <citation type="journal article" date="1993" name="J. Bone Miner. Res.">
        <title>Molecular cloning of a plasma membrane calcium pump from human osteoblasts.</title>
        <authorList>
            <person name="Kumar R."/>
            <person name="Haugen J.D."/>
            <person name="Penniston J.T."/>
        </authorList>
    </citation>
    <scope>NUCLEOTIDE SEQUENCE [MRNA] (ISOFORM B)</scope>
    <source>
        <tissue>Osteoblast</tissue>
    </source>
</reference>
<reference key="3">
    <citation type="journal article" date="1993" name="J. Biol. Chem.">
        <title>Structure of the gene encoding the human plasma membrane calcium pump isoform 1.</title>
        <authorList>
            <person name="Hilfiker H."/>
            <person name="Strehler-Page M.-A."/>
            <person name="Stauffer T.P."/>
            <person name="Carafoli E."/>
            <person name="Strehler E.E."/>
        </authorList>
    </citation>
    <scope>PARTIAL NUCLEOTIDE SEQUENCE [GENOMIC DNA] (ISOFORMS A AND B)</scope>
    <source>
        <tissue>Leukocyte</tissue>
    </source>
</reference>
<reference key="4">
    <citation type="submission" date="1999-01" db="EMBL/GenBank/DDBJ databases">
        <authorList>
            <person name="Strehler E.E."/>
            <person name="Strehler-Page M.-A."/>
        </authorList>
    </citation>
    <scope>SEQUENCE REVISION</scope>
</reference>
<reference key="5">
    <citation type="journal article" date="1989" name="Proc. Natl. Acad. Sci. U.S.A.">
        <title>mRNAs for plasma membrane calcium pump isoforms differing in their regulatory domain are generated by alternative splicing that involves two internal donor sites in a single exon.</title>
        <authorList>
            <person name="Strehler E.E."/>
            <person name="Strehler-Page M.-A."/>
            <person name="Vogel G."/>
            <person name="Carafoli E."/>
        </authorList>
    </citation>
    <scope>PARTIAL NUCLEOTIDE SEQUENCE [GENOMIC DNA] (ISOFORMS A; C AND D)</scope>
    <source>
        <tissue>Fetal skeletal muscle</tissue>
    </source>
</reference>
<reference key="6">
    <citation type="journal article" date="1992" name="Biochemistry">
        <title>Study of calmodulin binding to the alternatively spliced C-terminal domain of the plasma membrane Ca2+ pump.</title>
        <authorList>
            <person name="Kessler F."/>
            <person name="Falchetto R."/>
            <person name="Heim R."/>
            <person name="Meili R."/>
            <person name="Vorherr T.E."/>
            <person name="Strehler E.E."/>
            <person name="Carafoli E."/>
        </authorList>
    </citation>
    <scope>PARTIAL NUCLEOTIDE SEQUENCE [MRNA] (ISOFORM A)</scope>
    <scope>REGION</scope>
    <scope>ALTERNATIVE SPLICING</scope>
    <scope>SUBUNIT</scope>
    <source>
        <tissue>Fetal brain</tissue>
    </source>
</reference>
<reference key="7">
    <citation type="journal article" date="1993" name="J. Biol. Chem.">
        <title>Quantitative analysis of alternative splicing options of human plasma membrane calcium pump genes.</title>
        <authorList>
            <person name="Stauffer T.P."/>
            <person name="Hilfiker H."/>
            <person name="Carafoli E."/>
            <person name="Strehler E.E."/>
        </authorList>
    </citation>
    <scope>PARTIAL NUCLEOTIDE SEQUENCE [MRNA] (ISOFORMS A AND E)</scope>
    <source>
        <tissue>Brain cortex</tissue>
    </source>
</reference>
<reference key="8">
    <citation type="journal article" date="1994" name="J. Biol. Chem.">
        <authorList>
            <person name="Stauffer T.P."/>
            <person name="Hilfiker H."/>
            <person name="Carafoli E."/>
            <person name="Strehler E.E."/>
        </authorList>
    </citation>
    <scope>ERRATUM OF PUBMED:8245032</scope>
</reference>
<reference key="9">
    <citation type="journal article" date="1993" name="Am. J. Physiol.">
        <title>Human and rat intestinal plasma membrane calcium pump isoforms.</title>
        <authorList>
            <person name="Howard A."/>
            <person name="Legon S."/>
            <person name="Walters J.R."/>
        </authorList>
    </citation>
    <scope>ALTERNATIVE SPLICING (ISOFORM K)</scope>
    <source>
        <tissue>Small intestine mucosa</tissue>
    </source>
</reference>
<reference key="10">
    <citation type="journal article" date="1989" name="Biochemistry">
        <title>Primary structure of the cAMP-dependent phosphorylation site of the plasma membrane calcium pump.</title>
        <authorList>
            <person name="James P.H."/>
            <person name="Pruschy M."/>
            <person name="Vorherr T.E."/>
            <person name="Penniston J.T."/>
            <person name="Carafoli E."/>
        </authorList>
    </citation>
    <scope>PHOSPHORYLATION BY CAMP KINASE</scope>
</reference>
<reference key="11">
    <citation type="journal article" date="1991" name="J. Biol. Chem.">
        <title>Protein kinase C phosphorylates the carboxyl terminus of the plasma membrane Ca(2+)-ATPase from human erythrocytes.</title>
        <authorList>
            <person name="Wang K.K.W."/>
            <person name="Wright L.C."/>
            <person name="Machan C.L."/>
            <person name="Allen B.G."/>
            <person name="Conigrave A.D."/>
            <person name="Roufogalis B.D."/>
        </authorList>
    </citation>
    <scope>PHOSPHORYLATION AT THR-1116 BY PROTEIN KINASE C</scope>
</reference>
<reference key="12">
    <citation type="journal article" date="2003" name="Ann. N. Y. Acad. Sci.">
        <title>Characterization of PISP, a novel single-PDZ protein that binds to all plasma membrane Ca2+-ATPase b-splice variants.</title>
        <authorList>
            <person name="Goellner G.M."/>
            <person name="DeMarco S.J."/>
            <person name="Strehler E.E."/>
        </authorList>
    </citation>
    <scope>INTERACTION WITH PDZD11</scope>
</reference>
<reference key="13">
    <citation type="journal article" date="2006" name="Cell">
        <title>Global, in vivo, and site-specific phosphorylation dynamics in signaling networks.</title>
        <authorList>
            <person name="Olsen J.V."/>
            <person name="Blagoev B."/>
            <person name="Gnad F."/>
            <person name="Macek B."/>
            <person name="Kumar C."/>
            <person name="Mortensen P."/>
            <person name="Mann M."/>
        </authorList>
    </citation>
    <scope>PHOSPHORYLATION [LARGE SCALE ANALYSIS] AT SER-1155 AND SER-1182</scope>
    <scope>IDENTIFICATION BY MASS SPECTROMETRY [LARGE SCALE ANALYSIS]</scope>
    <source>
        <tissue>Cervix carcinoma</tissue>
    </source>
</reference>
<reference key="14">
    <citation type="journal article" date="2008" name="Cell Calcium">
        <title>Inhibitory interaction of the 14-3-3 proteins with ubiquitous (PMCA1) and tissue-specific (PMCA3) isoforms of the plasma membrane Ca2+ pump.</title>
        <authorList>
            <person name="Linde C.I."/>
            <person name="Di Leva F."/>
            <person name="Domi T."/>
            <person name="Tosatto S.C."/>
            <person name="Brini M."/>
            <person name="Carafoli E."/>
        </authorList>
    </citation>
    <scope>INTERACTION WITH YWHAE</scope>
    <scope>SUBCELLULAR LOCATION</scope>
</reference>
<reference key="15">
    <citation type="journal article" date="2008" name="Proc. Natl. Acad. Sci. U.S.A.">
        <title>A quantitative atlas of mitotic phosphorylation.</title>
        <authorList>
            <person name="Dephoure N."/>
            <person name="Zhou C."/>
            <person name="Villen J."/>
            <person name="Beausoleil S.A."/>
            <person name="Bakalarski C.E."/>
            <person name="Elledge S.J."/>
            <person name="Gygi S.P."/>
        </authorList>
    </citation>
    <scope>PHOSPHORYLATION [LARGE SCALE ANALYSIS] AT SER-17; SER-1155; THR-1165; SER-1178 AND SER-1182</scope>
    <scope>IDENTIFICATION BY MASS SPECTROMETRY [LARGE SCALE ANALYSIS]</scope>
    <source>
        <tissue>Cervix carcinoma</tissue>
    </source>
</reference>
<reference key="16">
    <citation type="journal article" date="2010" name="Sci. Signal.">
        <title>Quantitative phosphoproteomics reveals widespread full phosphorylation site occupancy during mitosis.</title>
        <authorList>
            <person name="Olsen J.V."/>
            <person name="Vermeulen M."/>
            <person name="Santamaria A."/>
            <person name="Kumar C."/>
            <person name="Miller M.L."/>
            <person name="Jensen L.J."/>
            <person name="Gnad F."/>
            <person name="Cox J."/>
            <person name="Jensen T.S."/>
            <person name="Nigg E.A."/>
            <person name="Brunak S."/>
            <person name="Mann M."/>
        </authorList>
    </citation>
    <scope>ACETYLATION [LARGE SCALE ANALYSIS] AT GLY-2</scope>
    <scope>PHOSPHORYLATION [LARGE SCALE ANALYSIS] AT SER-1155 AND THR-1165</scope>
    <scope>CLEAVAGE OF INITIATOR METHIONINE [LARGE SCALE ANALYSIS]</scope>
    <scope>IDENTIFICATION BY MASS SPECTROMETRY [LARGE SCALE ANALYSIS]</scope>
    <source>
        <tissue>Cervix carcinoma</tissue>
    </source>
</reference>
<reference key="17">
    <citation type="journal article" date="2011" name="BMC Syst. Biol.">
        <title>Initial characterization of the human central proteome.</title>
        <authorList>
            <person name="Burkard T.R."/>
            <person name="Planyavsky M."/>
            <person name="Kaupe I."/>
            <person name="Breitwieser F.P."/>
            <person name="Buerckstuemmer T."/>
            <person name="Bennett K.L."/>
            <person name="Superti-Furga G."/>
            <person name="Colinge J."/>
        </authorList>
    </citation>
    <scope>IDENTIFICATION BY MASS SPECTROMETRY [LARGE SCALE ANALYSIS]</scope>
</reference>
<reference key="18">
    <citation type="journal article" date="2011" name="Mol. Reprod. Dev.">
        <title>Coexpression and estrogen-mediated regulation of TRPV6 and PMCA1 in the human endometrium during the menstrual cycle.</title>
        <authorList>
            <person name="Yang H."/>
            <person name="Choi K.C."/>
            <person name="Hyun S.H."/>
            <person name="Jeung E.B."/>
        </authorList>
    </citation>
    <scope>TISSUE SPECIFICITY</scope>
    <scope>INDUCTION</scope>
</reference>
<reference key="19">
    <citation type="journal article" date="2011" name="Proc. Natl. Acad. Sci. U.S.A.">
        <title>POST, partner of stromal interaction molecule 1 (STIM1), targets STIM1 to multiple transporters.</title>
        <authorList>
            <person name="Krapivinsky G."/>
            <person name="Krapivinsky L."/>
            <person name="Stotz S.C."/>
            <person name="Manasian Y."/>
            <person name="Clapham D.E."/>
        </authorList>
    </citation>
    <scope>INTERACTION WITH SLC35G1 AND STIM1</scope>
</reference>
<reference key="20">
    <citation type="journal article" date="2011" name="Sci. Signal.">
        <title>System-wide temporal characterization of the proteome and phosphoproteome of human embryonic stem cell differentiation.</title>
        <authorList>
            <person name="Rigbolt K.T."/>
            <person name="Prokhorova T.A."/>
            <person name="Akimov V."/>
            <person name="Henningsen J."/>
            <person name="Johansen P.T."/>
            <person name="Kratchmarova I."/>
            <person name="Kassem M."/>
            <person name="Mann M."/>
            <person name="Olsen J.V."/>
            <person name="Blagoev B."/>
        </authorList>
    </citation>
    <scope>PHOSPHORYLATION [LARGE SCALE ANALYSIS] AT SER-1155; SER-1178 AND SER-1182</scope>
    <scope>IDENTIFICATION BY MASS SPECTROMETRY [LARGE SCALE ANALYSIS]</scope>
</reference>
<reference key="21">
    <citation type="journal article" date="2013" name="J. Proteome Res.">
        <title>Toward a comprehensive characterization of a human cancer cell phosphoproteome.</title>
        <authorList>
            <person name="Zhou H."/>
            <person name="Di Palma S."/>
            <person name="Preisinger C."/>
            <person name="Peng M."/>
            <person name="Polat A.N."/>
            <person name="Heck A.J."/>
            <person name="Mohammed S."/>
        </authorList>
    </citation>
    <scope>PHOSPHORYLATION [LARGE SCALE ANALYSIS] AT SER-8; SER-17; SER-1155 AND THR-1165</scope>
    <scope>IDENTIFICATION BY MASS SPECTROMETRY [LARGE SCALE ANALYSIS]</scope>
    <source>
        <tissue>Cervix carcinoma</tissue>
        <tissue>Erythroleukemia</tissue>
    </source>
</reference>
<reference key="22">
    <citation type="journal article" date="2014" name="J. Proteomics">
        <title>An enzyme assisted RP-RPLC approach for in-depth analysis of human liver phosphoproteome.</title>
        <authorList>
            <person name="Bian Y."/>
            <person name="Song C."/>
            <person name="Cheng K."/>
            <person name="Dong M."/>
            <person name="Wang F."/>
            <person name="Huang J."/>
            <person name="Sun D."/>
            <person name="Wang L."/>
            <person name="Ye M."/>
            <person name="Zou H."/>
        </authorList>
    </citation>
    <scope>PHOSPHORYLATION [LARGE SCALE ANALYSIS] AT SER-1155</scope>
    <scope>IDENTIFICATION BY MASS SPECTROMETRY [LARGE SCALE ANALYSIS]</scope>
    <source>
        <tissue>Liver</tissue>
    </source>
</reference>
<reference key="23">
    <citation type="journal article" date="2017" name="Int. J. Biol. Sci.">
        <title>ATP2B1 gene Silencing Increases Insulin Sensitivity through Facilitating Akt Activation via the Ca2+/calmodulin Signaling Pathway and Ca2+-associated eNOS Activation in Endothelial Cells.</title>
        <authorList>
            <person name="Long Y."/>
            <person name="Xia J.Y."/>
            <person name="Chen S.W."/>
            <person name="Gao C.L."/>
            <person name="Liang G.N."/>
            <person name="He X.M."/>
            <person name="Wu J."/>
            <person name="Jiang C.X."/>
            <person name="Liu X."/>
            <person name="Huang W."/>
            <person name="Wan Q."/>
            <person name="Xu Y."/>
        </authorList>
    </citation>
    <scope>FUNCTION</scope>
</reference>
<reference evidence="22" key="24">
    <citation type="journal article" date="2018" name="Nat. Commun.">
        <title>Structure of the human plasma membrane Ca2+-ATPase 1 in complex with its obligatory subunit neuroplastin.</title>
        <authorList>
            <person name="Gong D."/>
            <person name="Chi X."/>
            <person name="Ren K."/>
            <person name="Huang G."/>
            <person name="Zhou G."/>
            <person name="Yan N."/>
            <person name="Lei J."/>
            <person name="Zhou Q."/>
        </authorList>
    </citation>
    <scope>STRUCTURE BY ELECTRON MICROSCOPY (4.11 ANGSTROMS) IN COMPLEX WITH NPTN</scope>
    <scope>BIOPHYSICOCHEMICAL PROPERTIES</scope>
    <scope>CATALYTIC ACTIVITY</scope>
    <scope>TOPOLOGY</scope>
</reference>
<reference key="25">
    <citation type="journal article" date="1997" name="J. Mol. Med.">
        <title>Investigation of the Met-267 Arg exchange in isoform 1 of the human plasma membrane calcium pump in patients with essential hypertension by the amplification-created restriction site technique.</title>
        <authorList>
            <person name="Benkwitz C."/>
            <person name="Kubsisch C."/>
            <person name="Kraft K."/>
            <person name="Neyses L."/>
        </authorList>
    </citation>
    <scope>VARIANT ARG-267</scope>
</reference>
<reference key="26">
    <citation type="journal article" date="2022" name="Am. J. Hum. Genet.">
        <title>De novo variants in ATP2B1 lead to neurodevelopmental delay.</title>
        <authorList>
            <person name="Rahimi M.J."/>
            <person name="Urban N."/>
            <person name="Wegler M."/>
            <person name="Sticht H."/>
            <person name="Schaefer M."/>
            <person name="Popp B."/>
            <person name="Gaunitz F."/>
            <person name="Morleo M."/>
            <person name="Nigro V."/>
            <person name="Maitz S."/>
            <person name="Mancini G.M.S."/>
            <person name="Ruivenkamp C."/>
            <person name="Suk E.K."/>
            <person name="Bartolomaeus T."/>
            <person name="Merkenschlager A."/>
            <person name="Koboldt D."/>
            <person name="Bartholomew D."/>
            <person name="Stegmann A.P.A."/>
            <person name="Sinnema M."/>
            <person name="Duynisveld I."/>
            <person name="Salvarinova R."/>
            <person name="Race S."/>
            <person name="de Vries B.B.A."/>
            <person name="Trimouille A."/>
            <person name="Naudion S."/>
            <person name="Marom D."/>
            <person name="Hamiel U."/>
            <person name="Henig N."/>
            <person name="Demurger F."/>
            <person name="Rahner N."/>
            <person name="Bartels E."/>
            <person name="Hamm J.A."/>
            <person name="Putnam A.M."/>
            <person name="Person R."/>
            <person name="Abou Jamra R."/>
            <person name="Oppermann H."/>
        </authorList>
    </citation>
    <scope>VARIANTS MRD66 153-TRP--LEU-1220 DEL; GLY-239; ILE-264; LYS-425; ARG-459; 597-ARG--LEU-1220 DEL; PRO-763; CYS-789; LYS-824; ARG-857; 878-GLN--LEU-1220 DEL AND GLN-991</scope>
    <scope>CHARACTERIZATION OF VARIANTS MRD66 GLY-239; ILE-264; LYS-425; ARG-459; PRO-763; CYS-789; LYS-824; ARG-857 AND GLN-991</scope>
    <scope>INVOLVEMENT IN MRD66</scope>
    <scope>FUNCTION</scope>
    <scope>SUBCELLULAR LOCATION</scope>
    <scope>CHARACTERIZATION OF VARIANTS THR-598 AND SER-779</scope>
    <scope>VARIANT THR-598</scope>
</reference>
<dbReference type="EC" id="7.2.2.10" evidence="20"/>
<dbReference type="EMBL" id="J04027">
    <property type="protein sequence ID" value="AAA74511.1"/>
    <property type="molecule type" value="mRNA"/>
</dbReference>
<dbReference type="EMBL" id="M95541">
    <property type="protein sequence ID" value="AAA35999.1"/>
    <property type="molecule type" value="mRNA"/>
</dbReference>
<dbReference type="EMBL" id="M95542">
    <property type="protein sequence ID" value="AAA36000.1"/>
    <property type="molecule type" value="mRNA"/>
</dbReference>
<dbReference type="EMBL" id="L14561">
    <property type="protein sequence ID" value="AAD09924.1"/>
    <property type="molecule type" value="Genomic_DNA"/>
</dbReference>
<dbReference type="EMBL" id="L14561">
    <property type="protein sequence ID" value="AAD09925.1"/>
    <property type="molecule type" value="Genomic_DNA"/>
</dbReference>
<dbReference type="EMBL" id="M25824">
    <property type="protein sequence ID" value="AAA58383.1"/>
    <property type="molecule type" value="Genomic_DNA"/>
</dbReference>
<dbReference type="EMBL" id="M25824">
    <property type="protein sequence ID" value="AAA58382.1"/>
    <property type="molecule type" value="Genomic_DNA"/>
</dbReference>
<dbReference type="EMBL" id="M25824">
    <property type="protein sequence ID" value="AAA58381.1"/>
    <property type="molecule type" value="Genomic_DNA"/>
</dbReference>
<dbReference type="EMBL" id="S49852">
    <property type="protein sequence ID" value="AAB24324.1"/>
    <property type="molecule type" value="mRNA"/>
</dbReference>
<dbReference type="EMBL" id="U15686">
    <property type="protein sequence ID" value="AAA60983.1"/>
    <property type="molecule type" value="mRNA"/>
</dbReference>
<dbReference type="EMBL" id="U15687">
    <property type="protein sequence ID" value="AAA60984.1"/>
    <property type="molecule type" value="mRNA"/>
</dbReference>
<dbReference type="CCDS" id="CCDS41817.1">
    <molecule id="P20020-2"/>
</dbReference>
<dbReference type="CCDS" id="CCDS9035.1">
    <molecule id="P20020-3"/>
</dbReference>
<dbReference type="CCDS" id="CCDS91736.1">
    <molecule id="P20020-5"/>
</dbReference>
<dbReference type="PIR" id="A30802">
    <property type="entry name" value="A30802"/>
</dbReference>
<dbReference type="PIR" id="E49570">
    <property type="entry name" value="E49570"/>
</dbReference>
<dbReference type="PIR" id="I55491">
    <property type="entry name" value="I55491"/>
</dbReference>
<dbReference type="PIR" id="I70165">
    <property type="entry name" value="I70165"/>
</dbReference>
<dbReference type="RefSeq" id="NP_001001323.1">
    <molecule id="P20020-2"/>
    <property type="nucleotide sequence ID" value="NM_001001323.2"/>
</dbReference>
<dbReference type="RefSeq" id="NP_001353449.1">
    <molecule id="P20020-3"/>
    <property type="nucleotide sequence ID" value="NM_001366520.1"/>
</dbReference>
<dbReference type="RefSeq" id="NP_001353450.1">
    <molecule id="P20020-3"/>
    <property type="nucleotide sequence ID" value="NM_001366521.1"/>
</dbReference>
<dbReference type="RefSeq" id="NP_001353451.1">
    <molecule id="P20020-3"/>
    <property type="nucleotide sequence ID" value="NM_001366522.1"/>
</dbReference>
<dbReference type="RefSeq" id="NP_001353452.1">
    <molecule id="P20020-2"/>
    <property type="nucleotide sequence ID" value="NM_001366523.1"/>
</dbReference>
<dbReference type="RefSeq" id="NP_001353453.1">
    <molecule id="P20020-4"/>
    <property type="nucleotide sequence ID" value="NM_001366524.1"/>
</dbReference>
<dbReference type="RefSeq" id="NP_001353454.1">
    <molecule id="P20020-4"/>
    <property type="nucleotide sequence ID" value="NM_001366525.1"/>
</dbReference>
<dbReference type="RefSeq" id="NP_001353455.1">
    <molecule id="P20020-5"/>
    <property type="nucleotide sequence ID" value="NM_001366526.1"/>
</dbReference>
<dbReference type="RefSeq" id="NP_001353456.1">
    <molecule id="P20020-5"/>
    <property type="nucleotide sequence ID" value="NM_001366527.1"/>
</dbReference>
<dbReference type="RefSeq" id="NP_001399975.1">
    <molecule id="P20020-3"/>
    <property type="nucleotide sequence ID" value="NM_001413046.1"/>
</dbReference>
<dbReference type="RefSeq" id="NP_001399976.1">
    <molecule id="P20020-3"/>
    <property type="nucleotide sequence ID" value="NM_001413047.1"/>
</dbReference>
<dbReference type="RefSeq" id="NP_001399978.1">
    <molecule id="P20020-6"/>
    <property type="nucleotide sequence ID" value="NM_001413049.1"/>
</dbReference>
<dbReference type="RefSeq" id="NP_001399979.1">
    <molecule id="P20020-6"/>
    <property type="nucleotide sequence ID" value="NM_001413050.1"/>
</dbReference>
<dbReference type="RefSeq" id="NP_001673.2">
    <molecule id="P20020-3"/>
    <property type="nucleotide sequence ID" value="NM_001682.2"/>
</dbReference>
<dbReference type="RefSeq" id="XP_011536709.1">
    <property type="nucleotide sequence ID" value="XM_011538407.2"/>
</dbReference>
<dbReference type="RefSeq" id="XP_016874847.1">
    <property type="nucleotide sequence ID" value="XM_017019358.1"/>
</dbReference>
<dbReference type="RefSeq" id="XP_047284845.1">
    <molecule id="P20020-4"/>
    <property type="nucleotide sequence ID" value="XM_047428889.1"/>
</dbReference>
<dbReference type="RefSeq" id="XP_047284846.1">
    <molecule id="P20020-4"/>
    <property type="nucleotide sequence ID" value="XM_047428890.1"/>
</dbReference>
<dbReference type="RefSeq" id="XP_047284847.1">
    <molecule id="P20020-4"/>
    <property type="nucleotide sequence ID" value="XM_047428891.1"/>
</dbReference>
<dbReference type="RefSeq" id="XP_047284848.1">
    <molecule id="P20020-4"/>
    <property type="nucleotide sequence ID" value="XM_047428892.1"/>
</dbReference>
<dbReference type="RefSeq" id="XP_047284849.1">
    <molecule id="P20020-4"/>
    <property type="nucleotide sequence ID" value="XM_047428893.1"/>
</dbReference>
<dbReference type="RefSeq" id="XP_047284850.1">
    <molecule id="P20020-4"/>
    <property type="nucleotide sequence ID" value="XM_047428894.1"/>
</dbReference>
<dbReference type="RefSeq" id="XP_047284852.1">
    <molecule id="P20020-3"/>
    <property type="nucleotide sequence ID" value="XM_047428896.1"/>
</dbReference>
<dbReference type="RefSeq" id="XP_047284853.1">
    <molecule id="P20020-3"/>
    <property type="nucleotide sequence ID" value="XM_047428897.1"/>
</dbReference>
<dbReference type="RefSeq" id="XP_054228102.1">
    <molecule id="P20020-4"/>
    <property type="nucleotide sequence ID" value="XM_054372127.1"/>
</dbReference>
<dbReference type="RefSeq" id="XP_054228103.1">
    <molecule id="P20020-3"/>
    <property type="nucleotide sequence ID" value="XM_054372128.1"/>
</dbReference>
<dbReference type="RefSeq" id="XP_054228105.1">
    <molecule id="P20020-6"/>
    <property type="nucleotide sequence ID" value="XM_054372130.1"/>
</dbReference>
<dbReference type="PDB" id="6A69">
    <property type="method" value="EM"/>
    <property type="resolution" value="4.11 A"/>
    <property type="chains" value="A=1-1220"/>
</dbReference>
<dbReference type="PDBsum" id="6A69"/>
<dbReference type="EMDB" id="EMD-6987"/>
<dbReference type="SMR" id="P20020"/>
<dbReference type="BioGRID" id="106980">
    <property type="interactions" value="280"/>
</dbReference>
<dbReference type="FunCoup" id="P20020">
    <property type="interactions" value="2768"/>
</dbReference>
<dbReference type="IntAct" id="P20020">
    <property type="interactions" value="116"/>
</dbReference>
<dbReference type="MINT" id="P20020"/>
<dbReference type="STRING" id="9606.ENSP00000392043"/>
<dbReference type="DrugBank" id="DB01189">
    <property type="generic name" value="Desflurane"/>
</dbReference>
<dbReference type="DrugBank" id="DB01159">
    <property type="generic name" value="Halothane"/>
</dbReference>
<dbReference type="DrugBank" id="DB00867">
    <property type="generic name" value="Ritodrine"/>
</dbReference>
<dbReference type="DrugBank" id="DB01236">
    <property type="generic name" value="Sevoflurane"/>
</dbReference>
<dbReference type="TCDB" id="3.A.3.2.25">
    <property type="family name" value="the p-type atpase (p-atpase) superfamily"/>
</dbReference>
<dbReference type="GlyGen" id="P20020">
    <property type="glycosylation" value="1 site, 1 N-linked glycan (1 site)"/>
</dbReference>
<dbReference type="iPTMnet" id="P20020"/>
<dbReference type="PhosphoSitePlus" id="P20020"/>
<dbReference type="SwissPalm" id="P20020"/>
<dbReference type="BioMuta" id="ATP2B1"/>
<dbReference type="DMDM" id="14286104"/>
<dbReference type="jPOST" id="P20020"/>
<dbReference type="MassIVE" id="P20020"/>
<dbReference type="PaxDb" id="9606-ENSP00000392043"/>
<dbReference type="PeptideAtlas" id="P20020"/>
<dbReference type="ProteomicsDB" id="53706">
    <molecule id="P20020-1"/>
</dbReference>
<dbReference type="ProteomicsDB" id="53707">
    <molecule id="P20020-2"/>
</dbReference>
<dbReference type="ProteomicsDB" id="53708">
    <molecule id="P20020-3"/>
</dbReference>
<dbReference type="ProteomicsDB" id="53709">
    <molecule id="P20020-4"/>
</dbReference>
<dbReference type="ProteomicsDB" id="53710">
    <molecule id="P20020-5"/>
</dbReference>
<dbReference type="ProteomicsDB" id="53711">
    <molecule id="P20020-6"/>
</dbReference>
<dbReference type="Pumba" id="P20020"/>
<dbReference type="Antibodypedia" id="2168">
    <property type="antibodies" value="129 antibodies from 28 providers"/>
</dbReference>
<dbReference type="DNASU" id="490"/>
<dbReference type="Ensembl" id="ENST00000359142.8">
    <molecule id="P20020-2"/>
    <property type="protein sequence ID" value="ENSP00000352054.3"/>
    <property type="gene ID" value="ENSG00000070961.17"/>
</dbReference>
<dbReference type="Ensembl" id="ENST00000428670.8">
    <molecule id="P20020-3"/>
    <property type="protein sequence ID" value="ENSP00000392043.3"/>
    <property type="gene ID" value="ENSG00000070961.17"/>
</dbReference>
<dbReference type="Ensembl" id="ENST00000551310.2">
    <molecule id="P20020-2"/>
    <property type="protein sequence ID" value="ENSP00000447041.2"/>
    <property type="gene ID" value="ENSG00000070961.17"/>
</dbReference>
<dbReference type="Ensembl" id="ENST00000705822.1">
    <molecule id="P20020-5"/>
    <property type="protein sequence ID" value="ENSP00000516172.1"/>
    <property type="gene ID" value="ENSG00000070961.17"/>
</dbReference>
<dbReference type="GeneID" id="490"/>
<dbReference type="KEGG" id="hsa:490"/>
<dbReference type="MANE-Select" id="ENST00000428670.8">
    <property type="protein sequence ID" value="ENSP00000392043.3"/>
    <property type="RefSeq nucleotide sequence ID" value="NM_001366521.1"/>
    <property type="RefSeq protein sequence ID" value="NP_001353450.1"/>
</dbReference>
<dbReference type="UCSC" id="uc001tbg.4">
    <molecule id="P20020-3"/>
    <property type="organism name" value="human"/>
</dbReference>
<dbReference type="AGR" id="HGNC:814"/>
<dbReference type="CTD" id="490"/>
<dbReference type="DisGeNET" id="490"/>
<dbReference type="GeneCards" id="ATP2B1"/>
<dbReference type="HGNC" id="HGNC:814">
    <property type="gene designation" value="ATP2B1"/>
</dbReference>
<dbReference type="HPA" id="ENSG00000070961">
    <property type="expression patterns" value="Tissue enhanced (bone)"/>
</dbReference>
<dbReference type="MalaCards" id="ATP2B1"/>
<dbReference type="MIM" id="108731">
    <property type="type" value="gene"/>
</dbReference>
<dbReference type="MIM" id="619910">
    <property type="type" value="phenotype"/>
</dbReference>
<dbReference type="neXtProt" id="NX_P20020"/>
<dbReference type="OpenTargets" id="ENSG00000070961"/>
<dbReference type="Orphanet" id="528084">
    <property type="disease" value="Non-specific syndromic intellectual disability"/>
</dbReference>
<dbReference type="PharmGKB" id="PA25107"/>
<dbReference type="VEuPathDB" id="HostDB:ENSG00000070961"/>
<dbReference type="eggNOG" id="KOG0204">
    <property type="taxonomic scope" value="Eukaryota"/>
</dbReference>
<dbReference type="GeneTree" id="ENSGT00940000158686"/>
<dbReference type="InParanoid" id="P20020"/>
<dbReference type="OMA" id="YRMYVKG"/>
<dbReference type="OrthoDB" id="116380at2759"/>
<dbReference type="PAN-GO" id="P20020">
    <property type="GO annotations" value="5 GO annotations based on evolutionary models"/>
</dbReference>
<dbReference type="PhylomeDB" id="P20020"/>
<dbReference type="TreeFam" id="TF300330"/>
<dbReference type="BRENDA" id="7.2.2.10">
    <property type="organism ID" value="2681"/>
</dbReference>
<dbReference type="PathwayCommons" id="P20020"/>
<dbReference type="Reactome" id="R-HSA-418359">
    <property type="pathway name" value="Reduction of cytosolic Ca++ levels"/>
</dbReference>
<dbReference type="Reactome" id="R-HSA-5578775">
    <property type="pathway name" value="Ion homeostasis"/>
</dbReference>
<dbReference type="Reactome" id="R-HSA-936837">
    <property type="pathway name" value="Ion transport by P-type ATPases"/>
</dbReference>
<dbReference type="Reactome" id="R-HSA-9662360">
    <property type="pathway name" value="Sensory processing of sound by inner hair cells of the cochlea"/>
</dbReference>
<dbReference type="SignaLink" id="P20020"/>
<dbReference type="SIGNOR" id="P20020"/>
<dbReference type="BioGRID-ORCS" id="490">
    <property type="hits" value="88 hits in 1158 CRISPR screens"/>
</dbReference>
<dbReference type="CD-CODE" id="91857CE7">
    <property type="entry name" value="Nucleolus"/>
</dbReference>
<dbReference type="CD-CODE" id="FB4E32DD">
    <property type="entry name" value="Presynaptic clusters and postsynaptic densities"/>
</dbReference>
<dbReference type="ChiTaRS" id="ATP2B1">
    <property type="organism name" value="human"/>
</dbReference>
<dbReference type="GeneWiki" id="ATP2B1"/>
<dbReference type="GenomeRNAi" id="490"/>
<dbReference type="Pharos" id="P20020">
    <property type="development level" value="Tbio"/>
</dbReference>
<dbReference type="PRO" id="PR:P20020"/>
<dbReference type="Proteomes" id="UP000005640">
    <property type="component" value="Chromosome 12"/>
</dbReference>
<dbReference type="RNAct" id="P20020">
    <property type="molecule type" value="protein"/>
</dbReference>
<dbReference type="Bgee" id="ENSG00000070961">
    <property type="expression patterns" value="Expressed in frontal pole and 205 other cell types or tissues"/>
</dbReference>
<dbReference type="ExpressionAtlas" id="P20020">
    <property type="expression patterns" value="baseline and differential"/>
</dbReference>
<dbReference type="GO" id="GO:0016323">
    <property type="term" value="C:basolateral plasma membrane"/>
    <property type="evidence" value="ECO:0000250"/>
    <property type="project" value="UniProtKB"/>
</dbReference>
<dbReference type="GO" id="GO:0042995">
    <property type="term" value="C:cell projection"/>
    <property type="evidence" value="ECO:0007669"/>
    <property type="project" value="UniProtKB-KW"/>
</dbReference>
<dbReference type="GO" id="GO:0070062">
    <property type="term" value="C:extracellular exosome"/>
    <property type="evidence" value="ECO:0007005"/>
    <property type="project" value="UniProtKB"/>
</dbReference>
<dbReference type="GO" id="GO:0098978">
    <property type="term" value="C:glutamatergic synapse"/>
    <property type="evidence" value="ECO:0007669"/>
    <property type="project" value="Ensembl"/>
</dbReference>
<dbReference type="GO" id="GO:0001772">
    <property type="term" value="C:immunological synapse"/>
    <property type="evidence" value="ECO:0000250"/>
    <property type="project" value="UniProtKB"/>
</dbReference>
<dbReference type="GO" id="GO:0043231">
    <property type="term" value="C:intracellular membrane-bounded organelle"/>
    <property type="evidence" value="ECO:0000318"/>
    <property type="project" value="GO_Central"/>
</dbReference>
<dbReference type="GO" id="GO:0016020">
    <property type="term" value="C:membrane"/>
    <property type="evidence" value="ECO:0007005"/>
    <property type="project" value="UniProtKB"/>
</dbReference>
<dbReference type="GO" id="GO:0005654">
    <property type="term" value="C:nucleoplasm"/>
    <property type="evidence" value="ECO:0000314"/>
    <property type="project" value="HPA"/>
</dbReference>
<dbReference type="GO" id="GO:0098684">
    <property type="term" value="C:photoreceptor ribbon synapse"/>
    <property type="evidence" value="ECO:0007669"/>
    <property type="project" value="Ensembl"/>
</dbReference>
<dbReference type="GO" id="GO:0005886">
    <property type="term" value="C:plasma membrane"/>
    <property type="evidence" value="ECO:0000314"/>
    <property type="project" value="SynGO-UCL"/>
</dbReference>
<dbReference type="GO" id="GO:0042734">
    <property type="term" value="C:presynaptic membrane"/>
    <property type="evidence" value="ECO:0000250"/>
    <property type="project" value="UniProtKB"/>
</dbReference>
<dbReference type="GO" id="GO:0030672">
    <property type="term" value="C:synaptic vesicle membrane"/>
    <property type="evidence" value="ECO:0000250"/>
    <property type="project" value="UniProtKB"/>
</dbReference>
<dbReference type="GO" id="GO:0005524">
    <property type="term" value="F:ATP binding"/>
    <property type="evidence" value="ECO:0007669"/>
    <property type="project" value="UniProtKB-KW"/>
</dbReference>
<dbReference type="GO" id="GO:0016887">
    <property type="term" value="F:ATP hydrolysis activity"/>
    <property type="evidence" value="ECO:0000314"/>
    <property type="project" value="UniProtKB"/>
</dbReference>
<dbReference type="GO" id="GO:0015085">
    <property type="term" value="F:calcium ion transmembrane transporter activity"/>
    <property type="evidence" value="ECO:0000314"/>
    <property type="project" value="ARUK-UCL"/>
</dbReference>
<dbReference type="GO" id="GO:0005516">
    <property type="term" value="F:calmodulin binding"/>
    <property type="evidence" value="ECO:0007669"/>
    <property type="project" value="UniProtKB-KW"/>
</dbReference>
<dbReference type="GO" id="GO:0046872">
    <property type="term" value="F:metal ion binding"/>
    <property type="evidence" value="ECO:0007669"/>
    <property type="project" value="UniProtKB-KW"/>
</dbReference>
<dbReference type="GO" id="GO:0140678">
    <property type="term" value="F:molecular function inhibitor activity"/>
    <property type="evidence" value="ECO:0000314"/>
    <property type="project" value="DisProt"/>
</dbReference>
<dbReference type="GO" id="GO:0005388">
    <property type="term" value="F:P-type calcium transporter activity"/>
    <property type="evidence" value="ECO:0000318"/>
    <property type="project" value="GO_Central"/>
</dbReference>
<dbReference type="GO" id="GO:1990034">
    <property type="term" value="P:calcium ion export across plasma membrane"/>
    <property type="evidence" value="ECO:0000314"/>
    <property type="project" value="ARUK-UCL"/>
</dbReference>
<dbReference type="GO" id="GO:0034220">
    <property type="term" value="P:monoatomic ion transmembrane transport"/>
    <property type="evidence" value="ECO:0000304"/>
    <property type="project" value="Reactome"/>
</dbReference>
<dbReference type="GO" id="GO:0001818">
    <property type="term" value="P:negative regulation of cytokine production"/>
    <property type="evidence" value="ECO:0000250"/>
    <property type="project" value="UniProtKB"/>
</dbReference>
<dbReference type="GO" id="GO:0051481">
    <property type="term" value="P:negative regulation of cytosolic calcium ion concentration"/>
    <property type="evidence" value="ECO:0000315"/>
    <property type="project" value="UniProtKB"/>
</dbReference>
<dbReference type="GO" id="GO:0030501">
    <property type="term" value="P:positive regulation of bone mineralization"/>
    <property type="evidence" value="ECO:0000250"/>
    <property type="project" value="UniProtKB"/>
</dbReference>
<dbReference type="GO" id="GO:0051928">
    <property type="term" value="P:positive regulation of calcium ion transport"/>
    <property type="evidence" value="ECO:0000250"/>
    <property type="project" value="UniProtKB"/>
</dbReference>
<dbReference type="GO" id="GO:0008217">
    <property type="term" value="P:regulation of blood pressure"/>
    <property type="evidence" value="ECO:0000250"/>
    <property type="project" value="UniProtKB"/>
</dbReference>
<dbReference type="GO" id="GO:1903779">
    <property type="term" value="P:regulation of cardiac conduction"/>
    <property type="evidence" value="ECO:0000304"/>
    <property type="project" value="Reactome"/>
</dbReference>
<dbReference type="GO" id="GO:1900076">
    <property type="term" value="P:regulation of cellular response to insulin stimulus"/>
    <property type="evidence" value="ECO:0000315"/>
    <property type="project" value="UniProtKB"/>
</dbReference>
<dbReference type="GO" id="GO:0051480">
    <property type="term" value="P:regulation of cytosolic calcium ion concentration"/>
    <property type="evidence" value="ECO:0000314"/>
    <property type="project" value="ARUK-UCL"/>
</dbReference>
<dbReference type="GO" id="GO:0003056">
    <property type="term" value="P:regulation of vascular associated smooth muscle contraction"/>
    <property type="evidence" value="ECO:0000250"/>
    <property type="project" value="UniProtKB"/>
</dbReference>
<dbReference type="CDD" id="cd02081">
    <property type="entry name" value="P-type_ATPase_Ca_PMCA-like"/>
    <property type="match status" value="1"/>
</dbReference>
<dbReference type="DisProt" id="DP02604">
    <molecule id="P20020-1"/>
</dbReference>
<dbReference type="FunFam" id="1.20.1110.10:FF:000001">
    <property type="entry name" value="Calcium-transporting ATPase"/>
    <property type="match status" value="1"/>
</dbReference>
<dbReference type="FunFam" id="1.20.1110.10:FF:000002">
    <property type="entry name" value="Calcium-transporting ATPase"/>
    <property type="match status" value="1"/>
</dbReference>
<dbReference type="FunFam" id="1.20.1110.10:FF:000008">
    <property type="entry name" value="Calcium-transporting ATPase"/>
    <property type="match status" value="1"/>
</dbReference>
<dbReference type="FunFam" id="2.70.150.10:FF:000001">
    <property type="entry name" value="Calcium-transporting ATPase"/>
    <property type="match status" value="1"/>
</dbReference>
<dbReference type="FunFam" id="3.40.1110.10:FF:000002">
    <property type="entry name" value="Calcium-transporting ATPase"/>
    <property type="match status" value="1"/>
</dbReference>
<dbReference type="FunFam" id="3.40.50.1000:FF:000007">
    <property type="entry name" value="Calcium-transporting ATPase"/>
    <property type="match status" value="1"/>
</dbReference>
<dbReference type="Gene3D" id="3.40.1110.10">
    <property type="entry name" value="Calcium-transporting ATPase, cytoplasmic domain N"/>
    <property type="match status" value="1"/>
</dbReference>
<dbReference type="Gene3D" id="2.70.150.10">
    <property type="entry name" value="Calcium-transporting ATPase, cytoplasmic transduction domain A"/>
    <property type="match status" value="1"/>
</dbReference>
<dbReference type="Gene3D" id="1.20.1110.10">
    <property type="entry name" value="Calcium-transporting ATPase, transmembrane domain"/>
    <property type="match status" value="3"/>
</dbReference>
<dbReference type="Gene3D" id="3.40.50.1000">
    <property type="entry name" value="HAD superfamily/HAD-like"/>
    <property type="match status" value="1"/>
</dbReference>
<dbReference type="InterPro" id="IPR022141">
    <property type="entry name" value="ATP_Ca_trans_C"/>
</dbReference>
<dbReference type="InterPro" id="IPR006068">
    <property type="entry name" value="ATPase_P-typ_cation-transptr_C"/>
</dbReference>
<dbReference type="InterPro" id="IPR004014">
    <property type="entry name" value="ATPase_P-typ_cation-transptr_N"/>
</dbReference>
<dbReference type="InterPro" id="IPR023299">
    <property type="entry name" value="ATPase_P-typ_cyto_dom_N"/>
</dbReference>
<dbReference type="InterPro" id="IPR018303">
    <property type="entry name" value="ATPase_P-typ_P_site"/>
</dbReference>
<dbReference type="InterPro" id="IPR023298">
    <property type="entry name" value="ATPase_P-typ_TM_dom_sf"/>
</dbReference>
<dbReference type="InterPro" id="IPR008250">
    <property type="entry name" value="ATPase_P-typ_transduc_dom_A_sf"/>
</dbReference>
<dbReference type="InterPro" id="IPR036412">
    <property type="entry name" value="HAD-like_sf"/>
</dbReference>
<dbReference type="InterPro" id="IPR023214">
    <property type="entry name" value="HAD_sf"/>
</dbReference>
<dbReference type="InterPro" id="IPR006408">
    <property type="entry name" value="P-type_ATPase_IIB"/>
</dbReference>
<dbReference type="InterPro" id="IPR001757">
    <property type="entry name" value="P_typ_ATPase"/>
</dbReference>
<dbReference type="InterPro" id="IPR044492">
    <property type="entry name" value="P_typ_ATPase_HD_dom"/>
</dbReference>
<dbReference type="NCBIfam" id="TIGR01517">
    <property type="entry name" value="ATPase-IIB_Ca"/>
    <property type="match status" value="1"/>
</dbReference>
<dbReference type="NCBIfam" id="TIGR01494">
    <property type="entry name" value="ATPase_P-type"/>
    <property type="match status" value="3"/>
</dbReference>
<dbReference type="PANTHER" id="PTHR24093">
    <property type="entry name" value="CATION TRANSPORTING ATPASE"/>
    <property type="match status" value="1"/>
</dbReference>
<dbReference type="PANTHER" id="PTHR24093:SF245">
    <property type="entry name" value="PLASMA MEMBRANE CALCIUM-TRANSPORTING ATPASE 1"/>
    <property type="match status" value="1"/>
</dbReference>
<dbReference type="Pfam" id="PF12424">
    <property type="entry name" value="ATP_Ca_trans_C"/>
    <property type="match status" value="1"/>
</dbReference>
<dbReference type="Pfam" id="PF13246">
    <property type="entry name" value="Cation_ATPase"/>
    <property type="match status" value="1"/>
</dbReference>
<dbReference type="Pfam" id="PF00689">
    <property type="entry name" value="Cation_ATPase_C"/>
    <property type="match status" value="1"/>
</dbReference>
<dbReference type="Pfam" id="PF00690">
    <property type="entry name" value="Cation_ATPase_N"/>
    <property type="match status" value="1"/>
</dbReference>
<dbReference type="Pfam" id="PF00122">
    <property type="entry name" value="E1-E2_ATPase"/>
    <property type="match status" value="2"/>
</dbReference>
<dbReference type="Pfam" id="PF00702">
    <property type="entry name" value="Hydrolase"/>
    <property type="match status" value="1"/>
</dbReference>
<dbReference type="PRINTS" id="PR00119">
    <property type="entry name" value="CATATPASE"/>
</dbReference>
<dbReference type="SFLD" id="SFLDS00003">
    <property type="entry name" value="Haloacid_Dehalogenase"/>
    <property type="match status" value="1"/>
</dbReference>
<dbReference type="SFLD" id="SFLDF00027">
    <property type="entry name" value="p-type_atpase"/>
    <property type="match status" value="1"/>
</dbReference>
<dbReference type="SMART" id="SM00831">
    <property type="entry name" value="Cation_ATPase_N"/>
    <property type="match status" value="1"/>
</dbReference>
<dbReference type="SUPFAM" id="SSF81653">
    <property type="entry name" value="Calcium ATPase, transduction domain A"/>
    <property type="match status" value="1"/>
</dbReference>
<dbReference type="SUPFAM" id="SSF81665">
    <property type="entry name" value="Calcium ATPase, transmembrane domain M"/>
    <property type="match status" value="1"/>
</dbReference>
<dbReference type="SUPFAM" id="SSF56784">
    <property type="entry name" value="HAD-like"/>
    <property type="match status" value="1"/>
</dbReference>
<dbReference type="SUPFAM" id="SSF81660">
    <property type="entry name" value="Metal cation-transporting ATPase, ATP-binding domain N"/>
    <property type="match status" value="1"/>
</dbReference>
<dbReference type="PROSITE" id="PS00154">
    <property type="entry name" value="ATPASE_E1_E2"/>
    <property type="match status" value="1"/>
</dbReference>
<sequence length="1220" mass="134685">MGDMANNSVAYSGVKNSLKEANHDGDFGITLAELRALMELRSTDALRKIQESYGDVYGICTKLKTSPNEGLSGNPADLERREAVFGKNFIPPKKPKTFLQLVWEALQDVTLIILEIAAIVSLGLSFYQPPEGDNALCGEVSVGEEEGEGETGWIEGAAILLSVVCVVLVTAFNDWSKEKQFRGLQSRIEQEQKFTVIRGGQVIQIPVADITVGDIAQVKYGDLLPADGILIQGNDLKIDESSLTGESDHVKKSLDKDPLLLSGTHVMEGSGRMVVTAVGVNSQTGIIFTLLGAGGEEEEKKDEKKKEKKNKKQDGAIENRNKAKAQDGAAMEMQPLKSEEGGDGDEKDKKKANLPKKEKSVLQGKLTKLAVQIGKAGLLMSAITVIILVLYFVIDTFWVQKRPWLAECTPIYIQYFVKFFIIGVTVLVVAVPEGLPLAVTISLAYSVKKMMKDNNLVRHLDACETMGNATAICSDKTGTLTMNRMTVVQAYINEKHYKKVPEPEAIPPNILSYLVTGISVNCAYTSKILPPEKEGGLPRHVGNKTECALLGLLLDLKRDYQDVRNEIPEEALYKVYTFNSVRKSMSTVLKNSDGSYRIFSKGASEIILKKCFKILSANGEAKVFRPRDRDDIVKTVIEPMASEGLRTICLAFRDFPAGEPEPEWDNENDIVTGLTCIAVVGIEDPVRPEVPDAIKKCQRAGITVRMVTGDNINTARAIATKCGILHPGEDFLCLEGKDFNRRIRNEKGEIEQERIDKIWPKLRVLARSSPTDKHTLVKGIIDSTVSDQRQVVAVTGDGTNDGPALKKADVGFAMGIAGTDVAKEASDIILTDDNFTSIVKAVMWGRNVYDSISKFLQFQLTVNVVAVIVAFTGACITQDSPLKAVQMLWVNLIMDTLASLALATEPPTESLLLRKPYGRNKPLISRTMMKNILGHAFYQLVVVFTLLFAGEKFFDIDSGRNAPLHAPPSEHYTIVFNTFVLMQLFNEINARKIHGERNVFEGIFNNAIFCTIVLGTFVVQIIIVQFGGKPFSCSELSIEQWLWSIFLGMGTLLWGQLISTIPTSRLKFLKEAGHGTQKEEIPEEELAEDVEEIDHAERELRRGQILWFRGLNRIQTQIRVVNAFRSSLYEGLEKPESRSSIHNFMTHPEFRIEDSEPHIPLIDDTDAEDDAPTKRNSSPPPSPNKNNNAVDSGIHLTIEMNKSATSSSPGSPLHSLETSL</sequence>
<gene>
    <name evidence="21" type="primary">ATP2B1</name>
    <name evidence="17" type="synonym">PMCA1</name>
</gene>
<evidence type="ECO:0000250" key="1">
    <source>
        <dbReference type="UniProtKB" id="G5E829"/>
    </source>
</evidence>
<evidence type="ECO:0000250" key="2">
    <source>
        <dbReference type="UniProtKB" id="P11505"/>
    </source>
</evidence>
<evidence type="ECO:0000250" key="3">
    <source>
        <dbReference type="UniProtKB" id="Q5ZWR1"/>
    </source>
</evidence>
<evidence type="ECO:0000255" key="4"/>
<evidence type="ECO:0000256" key="5">
    <source>
        <dbReference type="SAM" id="MobiDB-lite"/>
    </source>
</evidence>
<evidence type="ECO:0000269" key="6">
    <source>
    </source>
</evidence>
<evidence type="ECO:0000269" key="7">
    <source>
    </source>
</evidence>
<evidence type="ECO:0000269" key="8">
    <source>
    </source>
</evidence>
<evidence type="ECO:0000269" key="9">
    <source>
    </source>
</evidence>
<evidence type="ECO:0000269" key="10">
    <source>
    </source>
</evidence>
<evidence type="ECO:0000269" key="11">
    <source>
    </source>
</evidence>
<evidence type="ECO:0000269" key="12">
    <source>
    </source>
</evidence>
<evidence type="ECO:0000269" key="13">
    <source>
    </source>
</evidence>
<evidence type="ECO:0000269" key="14">
    <source>
    </source>
</evidence>
<evidence type="ECO:0000269" key="15">
    <source>
    </source>
</evidence>
<evidence type="ECO:0000303" key="16">
    <source>
    </source>
</evidence>
<evidence type="ECO:0000303" key="17">
    <source>
    </source>
</evidence>
<evidence type="ECO:0000305" key="18"/>
<evidence type="ECO:0000305" key="19">
    <source>
    </source>
</evidence>
<evidence type="ECO:0000305" key="20">
    <source>
    </source>
</evidence>
<evidence type="ECO:0000312" key="21">
    <source>
        <dbReference type="HGNC" id="HGNC:814"/>
    </source>
</evidence>
<evidence type="ECO:0007744" key="22">
    <source>
        <dbReference type="PDB" id="6A69"/>
    </source>
</evidence>
<evidence type="ECO:0007744" key="23">
    <source>
    </source>
</evidence>
<evidence type="ECO:0007744" key="24">
    <source>
    </source>
</evidence>
<evidence type="ECO:0007744" key="25">
    <source>
    </source>
</evidence>
<evidence type="ECO:0007744" key="26">
    <source>
    </source>
</evidence>
<evidence type="ECO:0007744" key="27">
    <source>
    </source>
</evidence>
<evidence type="ECO:0007744" key="28">
    <source>
    </source>
</evidence>